<comment type="function">
    <text evidence="1">NAD-binding protein involved in the addition of a carboxymethylaminomethyl (cmnm) group at the wobble position (U34) of certain tRNAs, forming tRNA-cmnm(5)s(2)U34.</text>
</comment>
<comment type="cofactor">
    <cofactor evidence="1">
        <name>FAD</name>
        <dbReference type="ChEBI" id="CHEBI:57692"/>
    </cofactor>
</comment>
<comment type="subunit">
    <text evidence="1">Homodimer. Heterotetramer of two MnmE and two MnmG subunits.</text>
</comment>
<comment type="subcellular location">
    <subcellularLocation>
        <location evidence="1">Cytoplasm</location>
    </subcellularLocation>
</comment>
<comment type="similarity">
    <text evidence="1">Belongs to the MnmG family.</text>
</comment>
<gene>
    <name evidence="1" type="primary">mnmG</name>
    <name evidence="1" type="synonym">gidA</name>
    <name type="ordered locus">AHA_4273</name>
</gene>
<evidence type="ECO:0000255" key="1">
    <source>
        <dbReference type="HAMAP-Rule" id="MF_00129"/>
    </source>
</evidence>
<feature type="chain" id="PRO_1000016540" description="tRNA uridine 5-carboxymethylaminomethyl modification enzyme MnmG">
    <location>
        <begin position="1"/>
        <end position="629"/>
    </location>
</feature>
<feature type="binding site" evidence="1">
    <location>
        <begin position="13"/>
        <end position="18"/>
    </location>
    <ligand>
        <name>FAD</name>
        <dbReference type="ChEBI" id="CHEBI:57692"/>
    </ligand>
</feature>
<feature type="binding site" evidence="1">
    <location>
        <begin position="273"/>
        <end position="287"/>
    </location>
    <ligand>
        <name>NAD(+)</name>
        <dbReference type="ChEBI" id="CHEBI:57540"/>
    </ligand>
</feature>
<sequence length="629" mass="69690">MQYHEQFDVIVVGGGHAGTEAATAAARMGLNTLLLTHNIDTLGHMSCNPAIGGIGKGHLVKEVDALGGIMARAIDLGGIQFRTLNSSKGPAVRATRAQADRLLYKAVVRQMLENYPNLKIFQQACDDLIMDGDRVAGVVTQSGIRISGKTVVLTVGTFLNGLIHIGMENYKGGRAGDPPSIALAQRLRELPLRIDRLKTGTPPRIDARSVDLSVMQAQYGDDPRPVFSFIGDASQHPRQVPCYVTHTNERTHEVIRNNLDRSPMYAGVIEGIGPRYCPSIEDKITRFADKTAHQIFVEPEGLTTHELYPNGISTSLPFDVQVQIVRSVRGFENAHITRPGYAIEYDFFDPRDLKANMESKCIPNLFFAGQINGTTGYEEAAAQGLLAGLNAGLRAQEKDAWHPRRDQAYIGVMMDDLSTLGTREPYRMFTSRAEYRLLLREDNADLRLTGIGRELGLVDDERWGKFNAKMEQVEQERQRMRSTWIHPQHPSLEAVNALVNTPLTREQSLEELLRRPEVTYDALMAIEGVGPALPDTAAADQVEIQIKYAGYIERQHDEVEKQLRNENTLLPLDMNYRDVNGLSNEVIAKLNDAKPQTIGQASRISGITPAAISILLVHLKKHGLLRKTA</sequence>
<name>MNMG_AERHH</name>
<organism>
    <name type="scientific">Aeromonas hydrophila subsp. hydrophila (strain ATCC 7966 / DSM 30187 / BCRC 13018 / CCUG 14551 / JCM 1027 / KCTC 2358 / NCIMB 9240 / NCTC 8049)</name>
    <dbReference type="NCBI Taxonomy" id="380703"/>
    <lineage>
        <taxon>Bacteria</taxon>
        <taxon>Pseudomonadati</taxon>
        <taxon>Pseudomonadota</taxon>
        <taxon>Gammaproteobacteria</taxon>
        <taxon>Aeromonadales</taxon>
        <taxon>Aeromonadaceae</taxon>
        <taxon>Aeromonas</taxon>
    </lineage>
</organism>
<reference key="1">
    <citation type="journal article" date="2006" name="J. Bacteriol.">
        <title>Genome sequence of Aeromonas hydrophila ATCC 7966T: jack of all trades.</title>
        <authorList>
            <person name="Seshadri R."/>
            <person name="Joseph S.W."/>
            <person name="Chopra A.K."/>
            <person name="Sha J."/>
            <person name="Shaw J."/>
            <person name="Graf J."/>
            <person name="Haft D.H."/>
            <person name="Wu M."/>
            <person name="Ren Q."/>
            <person name="Rosovitz M.J."/>
            <person name="Madupu R."/>
            <person name="Tallon L."/>
            <person name="Kim M."/>
            <person name="Jin S."/>
            <person name="Vuong H."/>
            <person name="Stine O.C."/>
            <person name="Ali A."/>
            <person name="Horneman A.J."/>
            <person name="Heidelberg J.F."/>
        </authorList>
    </citation>
    <scope>NUCLEOTIDE SEQUENCE [LARGE SCALE GENOMIC DNA]</scope>
    <source>
        <strain>ATCC 7966 / DSM 30187 / BCRC 13018 / CCUG 14551 / JCM 1027 / KCTC 2358 / NCIMB 9240 / NCTC 8049</strain>
    </source>
</reference>
<protein>
    <recommendedName>
        <fullName evidence="1">tRNA uridine 5-carboxymethylaminomethyl modification enzyme MnmG</fullName>
    </recommendedName>
    <alternativeName>
        <fullName evidence="1">Glucose-inhibited division protein A</fullName>
    </alternativeName>
</protein>
<keyword id="KW-0963">Cytoplasm</keyword>
<keyword id="KW-0274">FAD</keyword>
<keyword id="KW-0285">Flavoprotein</keyword>
<keyword id="KW-0520">NAD</keyword>
<keyword id="KW-1185">Reference proteome</keyword>
<keyword id="KW-0819">tRNA processing</keyword>
<dbReference type="EMBL" id="CP000462">
    <property type="protein sequence ID" value="ABK37418.1"/>
    <property type="molecule type" value="Genomic_DNA"/>
</dbReference>
<dbReference type="RefSeq" id="WP_011707918.1">
    <property type="nucleotide sequence ID" value="NC_008570.1"/>
</dbReference>
<dbReference type="RefSeq" id="YP_858690.1">
    <property type="nucleotide sequence ID" value="NC_008570.1"/>
</dbReference>
<dbReference type="SMR" id="A0KQY9"/>
<dbReference type="STRING" id="380703.AHA_4273"/>
<dbReference type="EnsemblBacteria" id="ABK37418">
    <property type="protein sequence ID" value="ABK37418"/>
    <property type="gene ID" value="AHA_4273"/>
</dbReference>
<dbReference type="GeneID" id="4487377"/>
<dbReference type="KEGG" id="aha:AHA_4273"/>
<dbReference type="PATRIC" id="fig|380703.7.peg.4222"/>
<dbReference type="eggNOG" id="COG0445">
    <property type="taxonomic scope" value="Bacteria"/>
</dbReference>
<dbReference type="HOGENOM" id="CLU_007831_2_2_6"/>
<dbReference type="OrthoDB" id="9815560at2"/>
<dbReference type="Proteomes" id="UP000000756">
    <property type="component" value="Chromosome"/>
</dbReference>
<dbReference type="GO" id="GO:0005829">
    <property type="term" value="C:cytosol"/>
    <property type="evidence" value="ECO:0007669"/>
    <property type="project" value="TreeGrafter"/>
</dbReference>
<dbReference type="GO" id="GO:0050660">
    <property type="term" value="F:flavin adenine dinucleotide binding"/>
    <property type="evidence" value="ECO:0007669"/>
    <property type="project" value="UniProtKB-UniRule"/>
</dbReference>
<dbReference type="GO" id="GO:0030488">
    <property type="term" value="P:tRNA methylation"/>
    <property type="evidence" value="ECO:0007669"/>
    <property type="project" value="TreeGrafter"/>
</dbReference>
<dbReference type="GO" id="GO:0002098">
    <property type="term" value="P:tRNA wobble uridine modification"/>
    <property type="evidence" value="ECO:0007669"/>
    <property type="project" value="InterPro"/>
</dbReference>
<dbReference type="FunFam" id="1.10.10.1800:FF:000001">
    <property type="entry name" value="tRNA uridine 5-carboxymethylaminomethyl modification enzyme MnmG"/>
    <property type="match status" value="1"/>
</dbReference>
<dbReference type="FunFam" id="1.10.150.570:FF:000001">
    <property type="entry name" value="tRNA uridine 5-carboxymethylaminomethyl modification enzyme MnmG"/>
    <property type="match status" value="1"/>
</dbReference>
<dbReference type="FunFam" id="3.50.50.60:FF:000002">
    <property type="entry name" value="tRNA uridine 5-carboxymethylaminomethyl modification enzyme MnmG"/>
    <property type="match status" value="1"/>
</dbReference>
<dbReference type="FunFam" id="3.50.50.60:FF:000010">
    <property type="entry name" value="tRNA uridine 5-carboxymethylaminomethyl modification enzyme MnmG"/>
    <property type="match status" value="1"/>
</dbReference>
<dbReference type="Gene3D" id="3.50.50.60">
    <property type="entry name" value="FAD/NAD(P)-binding domain"/>
    <property type="match status" value="2"/>
</dbReference>
<dbReference type="Gene3D" id="1.10.150.570">
    <property type="entry name" value="GidA associated domain, C-terminal subdomain"/>
    <property type="match status" value="1"/>
</dbReference>
<dbReference type="Gene3D" id="1.10.10.1800">
    <property type="entry name" value="tRNA uridine 5-carboxymethylaminomethyl modification enzyme MnmG/GidA"/>
    <property type="match status" value="1"/>
</dbReference>
<dbReference type="HAMAP" id="MF_00129">
    <property type="entry name" value="MnmG_GidA"/>
    <property type="match status" value="1"/>
</dbReference>
<dbReference type="InterPro" id="IPR036188">
    <property type="entry name" value="FAD/NAD-bd_sf"/>
</dbReference>
<dbReference type="InterPro" id="IPR049312">
    <property type="entry name" value="GIDA_C_N"/>
</dbReference>
<dbReference type="InterPro" id="IPR004416">
    <property type="entry name" value="MnmG"/>
</dbReference>
<dbReference type="InterPro" id="IPR002218">
    <property type="entry name" value="MnmG-rel"/>
</dbReference>
<dbReference type="InterPro" id="IPR020595">
    <property type="entry name" value="MnmG-rel_CS"/>
</dbReference>
<dbReference type="InterPro" id="IPR026904">
    <property type="entry name" value="MnmG_C"/>
</dbReference>
<dbReference type="InterPro" id="IPR047001">
    <property type="entry name" value="MnmG_C_subdom"/>
</dbReference>
<dbReference type="InterPro" id="IPR044920">
    <property type="entry name" value="MnmG_C_subdom_sf"/>
</dbReference>
<dbReference type="InterPro" id="IPR040131">
    <property type="entry name" value="MnmG_N"/>
</dbReference>
<dbReference type="NCBIfam" id="TIGR00136">
    <property type="entry name" value="mnmG_gidA"/>
    <property type="match status" value="1"/>
</dbReference>
<dbReference type="PANTHER" id="PTHR11806">
    <property type="entry name" value="GLUCOSE INHIBITED DIVISION PROTEIN A"/>
    <property type="match status" value="1"/>
</dbReference>
<dbReference type="PANTHER" id="PTHR11806:SF0">
    <property type="entry name" value="PROTEIN MTO1 HOMOLOG, MITOCHONDRIAL"/>
    <property type="match status" value="1"/>
</dbReference>
<dbReference type="Pfam" id="PF01134">
    <property type="entry name" value="GIDA"/>
    <property type="match status" value="1"/>
</dbReference>
<dbReference type="Pfam" id="PF21680">
    <property type="entry name" value="GIDA_C_1st"/>
    <property type="match status" value="1"/>
</dbReference>
<dbReference type="Pfam" id="PF13932">
    <property type="entry name" value="SAM_GIDA_C"/>
    <property type="match status" value="1"/>
</dbReference>
<dbReference type="PRINTS" id="PR00411">
    <property type="entry name" value="PNDRDTASEI"/>
</dbReference>
<dbReference type="SMART" id="SM01228">
    <property type="entry name" value="GIDA_assoc_3"/>
    <property type="match status" value="1"/>
</dbReference>
<dbReference type="SUPFAM" id="SSF51905">
    <property type="entry name" value="FAD/NAD(P)-binding domain"/>
    <property type="match status" value="1"/>
</dbReference>
<dbReference type="PROSITE" id="PS01280">
    <property type="entry name" value="GIDA_1"/>
    <property type="match status" value="1"/>
</dbReference>
<dbReference type="PROSITE" id="PS01281">
    <property type="entry name" value="GIDA_2"/>
    <property type="match status" value="1"/>
</dbReference>
<accession>A0KQY9</accession>
<proteinExistence type="inferred from homology"/>